<reference key="1">
    <citation type="journal article" date="1991" name="J. Virol.">
        <title>Evolution of influenza A virus nucleoprotein genes: implications for the origins of H1N1 human and classical swine viruses.</title>
        <authorList>
            <person name="Gorman O.T."/>
            <person name="Bean W.J."/>
            <person name="Kawaoka Y."/>
            <person name="Donatelli I."/>
            <person name="Guo Y."/>
            <person name="Webster R.G."/>
        </authorList>
    </citation>
    <scope>NUCLEOTIDE SEQUENCE [GENOMIC RNA]</scope>
</reference>
<sequence length="498" mass="56169">MASQGTKRSYEQMETGGERQNATEIRASVGRMIGGIGRFYIQMCTELKLSDYEGRLIQNSITIERMVLSAFDERRNKYLEEHPSAGKDPKKTGGPIYRRIDGKWIRELILYDKEEIRRIWRQANNGEDATAGLTHMMIWHSNLNDATYQRTRALVRTGMDPRMCSLMQGSTLPRRSGAAGAAVKGVGTMVMELIRMIKRGINDRNFWRGENGRRTRIAYERMCNILKGKFQTAAQRAMMDQVRESRNPGNAEIEDLIFLARSALILRGSVAHKSCLPACVYGLAVASGHDFEREGYSLVGIDPFRLLQNSQVFSLIRPNENPAHKSQLVWMACHSAAFEDLRVSSFIRGKKVVPRGQLSTRGVQIASNENMETMDSSTLELRSRYWAIRTRSGGNTNQQRASAGQISVQPTFSVQRNLPFERATVMAAFTGNTEGRTSDMRTEIIRIMESARPEDVSFQGRGVFELSDEKATSPIVPSFDMSNEGSYFFGDNAEEYDN</sequence>
<name>NCAP_I42A0</name>
<dbReference type="EMBL" id="M63758">
    <property type="protein sequence ID" value="AAA52257.1"/>
    <property type="molecule type" value="Genomic_RNA"/>
</dbReference>
<dbReference type="SMR" id="P26078"/>
<dbReference type="GO" id="GO:0019029">
    <property type="term" value="C:helical viral capsid"/>
    <property type="evidence" value="ECO:0007669"/>
    <property type="project" value="UniProtKB-UniRule"/>
</dbReference>
<dbReference type="GO" id="GO:0043657">
    <property type="term" value="C:host cell"/>
    <property type="evidence" value="ECO:0007669"/>
    <property type="project" value="GOC"/>
</dbReference>
<dbReference type="GO" id="GO:0042025">
    <property type="term" value="C:host cell nucleus"/>
    <property type="evidence" value="ECO:0007669"/>
    <property type="project" value="UniProtKB-SubCell"/>
</dbReference>
<dbReference type="GO" id="GO:1990904">
    <property type="term" value="C:ribonucleoprotein complex"/>
    <property type="evidence" value="ECO:0007669"/>
    <property type="project" value="UniProtKB-KW"/>
</dbReference>
<dbReference type="GO" id="GO:0019013">
    <property type="term" value="C:viral nucleocapsid"/>
    <property type="evidence" value="ECO:0007669"/>
    <property type="project" value="UniProtKB-UniRule"/>
</dbReference>
<dbReference type="GO" id="GO:0003723">
    <property type="term" value="F:RNA binding"/>
    <property type="evidence" value="ECO:0007669"/>
    <property type="project" value="UniProtKB-UniRule"/>
</dbReference>
<dbReference type="GO" id="GO:0005198">
    <property type="term" value="F:structural molecule activity"/>
    <property type="evidence" value="ECO:0007669"/>
    <property type="project" value="UniProtKB-UniRule"/>
</dbReference>
<dbReference type="GO" id="GO:0046718">
    <property type="term" value="P:symbiont entry into host cell"/>
    <property type="evidence" value="ECO:0007669"/>
    <property type="project" value="UniProtKB-KW"/>
</dbReference>
<dbReference type="GO" id="GO:0075732">
    <property type="term" value="P:viral penetration into host nucleus"/>
    <property type="evidence" value="ECO:0007669"/>
    <property type="project" value="UniProtKB-UniRule"/>
</dbReference>
<dbReference type="HAMAP" id="MF_04070">
    <property type="entry name" value="INFV_NCAP"/>
    <property type="match status" value="1"/>
</dbReference>
<dbReference type="InterPro" id="IPR002141">
    <property type="entry name" value="Flu_NP"/>
</dbReference>
<dbReference type="Pfam" id="PF00506">
    <property type="entry name" value="Flu_NP"/>
    <property type="match status" value="1"/>
</dbReference>
<dbReference type="SUPFAM" id="SSF161003">
    <property type="entry name" value="flu NP-like"/>
    <property type="match status" value="1"/>
</dbReference>
<organism>
    <name type="scientific">Influenza A virus (strain A/Swine/Jamesburg/1942 H1N1)</name>
    <dbReference type="NCBI Taxonomy" id="383538"/>
    <lineage>
        <taxon>Viruses</taxon>
        <taxon>Riboviria</taxon>
        <taxon>Orthornavirae</taxon>
        <taxon>Negarnaviricota</taxon>
        <taxon>Polyploviricotina</taxon>
        <taxon>Insthoviricetes</taxon>
        <taxon>Articulavirales</taxon>
        <taxon>Orthomyxoviridae</taxon>
        <taxon>Alphainfluenzavirus</taxon>
        <taxon>Alphainfluenzavirus influenzae</taxon>
        <taxon>Influenza A virus</taxon>
    </lineage>
</organism>
<keyword id="KW-0167">Capsid protein</keyword>
<keyword id="KW-1139">Helical capsid protein</keyword>
<keyword id="KW-1048">Host nucleus</keyword>
<keyword id="KW-0945">Host-virus interaction</keyword>
<keyword id="KW-0687">Ribonucleoprotein</keyword>
<keyword id="KW-0694">RNA-binding</keyword>
<keyword id="KW-0543">Viral nucleoprotein</keyword>
<keyword id="KW-1163">Viral penetration into host nucleus</keyword>
<keyword id="KW-0946">Virion</keyword>
<keyword id="KW-1160">Virus entry into host cell</keyword>
<accession>P26078</accession>
<protein>
    <recommendedName>
        <fullName evidence="1">Nucleoprotein</fullName>
    </recommendedName>
    <alternativeName>
        <fullName evidence="1">Nucleocapsid protein</fullName>
        <shortName evidence="1">Protein N</shortName>
    </alternativeName>
</protein>
<gene>
    <name evidence="1" type="primary">NP</name>
</gene>
<proteinExistence type="inferred from homology"/>
<feature type="chain" id="PRO_0000079131" description="Nucleoprotein">
    <location>
        <begin position="1"/>
        <end position="498"/>
    </location>
</feature>
<feature type="region of interest" description="Disordered" evidence="2">
    <location>
        <begin position="1"/>
        <end position="21"/>
    </location>
</feature>
<feature type="short sequence motif" description="Unconventional nuclear localization signal" evidence="1">
    <location>
        <begin position="1"/>
        <end position="18"/>
    </location>
</feature>
<feature type="short sequence motif" description="Bipartite nuclear localization signal" evidence="1">
    <location>
        <begin position="198"/>
        <end position="216"/>
    </location>
</feature>
<comment type="function">
    <text evidence="1">Encapsidates the negative strand viral RNA, protecting it from nucleases. The encapsidated genomic RNA is termed the ribonucleoprotein (RNP) and serves as template for transcription and replication. The RNP needs to be localized in the host nucleus to start an infectious cycle, but is too large to diffuse through the nuclear pore complex. NP comprises at least 2 nuclear localization signals that are responsible for the active RNP import into the nucleus through cellular importin alpha/beta pathway. Later in the infection, nclear export of RNPs are mediated through viral proteins NEP interacting with M1 which binds nucleoproteins. It is possible that nucleoprotein binds directly host exportin-1/XPO1 and plays an active role in RNPs nuclear export. M1 interaction with RNP seems to hide nucleoprotein's nuclear localization signals. Soon after a virion infects a new cell, M1 dissociates from the RNP under acidification of the virion driven by M2 protein. Dissociation of M1 from RNP unmasks nucleoprotein's nuclear localization signals, targeting the RNP to the nucleus.</text>
</comment>
<comment type="subunit">
    <text evidence="1">Homomultimerizes to form the nucleocapsid. May bind host exportin-1/XPO1. Binds to viral genomic RNA. Protein-RNA contacts are mediated by a combination of electrostatic interactions between positively charged residues and the phosphate backbone and planar interactions between aromatic side chains and bases.</text>
</comment>
<comment type="subcellular location">
    <subcellularLocation>
        <location evidence="1">Virion</location>
    </subcellularLocation>
    <subcellularLocation>
        <location evidence="1">Host nucleus</location>
    </subcellularLocation>
</comment>
<comment type="PTM">
    <text evidence="1">Late in virus-infected cells, may be cleaved from a 56-kDa protein to a 53-kDa protein by a cellular caspase. This cleavage might be a marker for the onset of apoptosis in infected cells or have a specific function in virus host interaction.</text>
</comment>
<comment type="similarity">
    <text evidence="1">Belongs to the influenza viruses nucleoprotein family.</text>
</comment>
<organismHost>
    <name type="scientific">Aves</name>
    <dbReference type="NCBI Taxonomy" id="8782"/>
</organismHost>
<organismHost>
    <name type="scientific">Homo sapiens</name>
    <name type="common">Human</name>
    <dbReference type="NCBI Taxonomy" id="9606"/>
</organismHost>
<organismHost>
    <name type="scientific">Sus scrofa</name>
    <name type="common">Pig</name>
    <dbReference type="NCBI Taxonomy" id="9823"/>
</organismHost>
<evidence type="ECO:0000255" key="1">
    <source>
        <dbReference type="HAMAP-Rule" id="MF_04070"/>
    </source>
</evidence>
<evidence type="ECO:0000256" key="2">
    <source>
        <dbReference type="SAM" id="MobiDB-lite"/>
    </source>
</evidence>